<keyword id="KW-1185">Reference proteome</keyword>
<proteinExistence type="inferred from homology"/>
<name>C_RINDR</name>
<comment type="similarity">
    <text evidence="2">Belongs to the morbillivirus protein C family.</text>
</comment>
<dbReference type="EMBL" id="X68311">
    <property type="protein sequence ID" value="CAA48391.1"/>
    <property type="molecule type" value="Genomic_RNA"/>
</dbReference>
<dbReference type="EMBL" id="Z30697">
    <property type="protein sequence ID" value="CAA83179.1"/>
    <property type="molecule type" value="Genomic_RNA"/>
</dbReference>
<dbReference type="PIR" id="JQ1931">
    <property type="entry name" value="JQ1931"/>
</dbReference>
<dbReference type="Proteomes" id="UP000008654">
    <property type="component" value="Genome"/>
</dbReference>
<dbReference type="InterPro" id="IPR003875">
    <property type="entry name" value="Paramyxovir_NSC"/>
</dbReference>
<dbReference type="Pfam" id="PF02725">
    <property type="entry name" value="Paramyxo_NS_C"/>
    <property type="match status" value="1"/>
</dbReference>
<evidence type="ECO:0000256" key="1">
    <source>
        <dbReference type="SAM" id="MobiDB-lite"/>
    </source>
</evidence>
<evidence type="ECO:0000305" key="2"/>
<feature type="chain" id="PRO_0000142805" description="Protein C">
    <location>
        <begin position="1"/>
        <end position="177"/>
    </location>
</feature>
<feature type="region of interest" description="Disordered" evidence="1">
    <location>
        <begin position="1"/>
        <end position="38"/>
    </location>
</feature>
<feature type="compositionally biased region" description="Polar residues" evidence="1">
    <location>
        <begin position="1"/>
        <end position="10"/>
    </location>
</feature>
<accession>Q03339</accession>
<organism>
    <name type="scientific">Rinderpest virus (strain RBOK)</name>
    <name type="common">RDV</name>
    <dbReference type="NCBI Taxonomy" id="36409"/>
    <lineage>
        <taxon>Viruses</taxon>
        <taxon>Riboviria</taxon>
        <taxon>Orthornavirae</taxon>
        <taxon>Negarnaviricota</taxon>
        <taxon>Haploviricotina</taxon>
        <taxon>Monjiviricetes</taxon>
        <taxon>Mononegavirales</taxon>
        <taxon>Paramyxoviridae</taxon>
        <taxon>Orthoparamyxovirinae</taxon>
        <taxon>Morbillivirus</taxon>
        <taxon>Morbillivirus pecoris</taxon>
        <taxon>Rinderpest morbillivirus</taxon>
    </lineage>
</organism>
<sequence>MSTKAWNASRLSGPDPSTPWSLRKPLQHGSRPPKGKRLTVCPPTRPKQTIRISASHASQQLDQAKAACLAVTIKDLEEATAVMRSWEHSLVTPQCIAPRYSIIMFMITAVKRLRESKMLTLSWFNQALMMVSKSGEEMRNLRTAMWILANLIPREVLPLTGDLLPSLQQQEPPMLKQ</sequence>
<organismHost>
    <name type="scientific">Bos indicus</name>
    <name type="common">Zebu</name>
    <dbReference type="NCBI Taxonomy" id="9915"/>
</organismHost>
<organismHost>
    <name type="scientific">Bos taurus</name>
    <name type="common">Bovine</name>
    <dbReference type="NCBI Taxonomy" id="9913"/>
</organismHost>
<organismHost>
    <name type="scientific">Bubalus bubalis</name>
    <name type="common">Domestic water buffalo</name>
    <dbReference type="NCBI Taxonomy" id="89462"/>
</organismHost>
<organismHost>
    <name type="scientific">Capra hircus</name>
    <name type="common">Goat</name>
    <dbReference type="NCBI Taxonomy" id="9925"/>
</organismHost>
<organismHost>
    <name type="scientific">Gazella</name>
    <name type="common">gazelles</name>
    <dbReference type="NCBI Taxonomy" id="9933"/>
</organismHost>
<organismHost>
    <name type="scientific">Giraffa camelopardalis</name>
    <name type="common">Giraffe</name>
    <dbReference type="NCBI Taxonomy" id="9894"/>
</organismHost>
<organismHost>
    <name type="scientific">Hippopotamus</name>
    <dbReference type="NCBI Taxonomy" id="9832"/>
</organismHost>
<organismHost>
    <name type="scientific">Ovis aries</name>
    <name type="common">Sheep</name>
    <dbReference type="NCBI Taxonomy" id="9940"/>
</organismHost>
<organismHost>
    <name type="scientific">Suidae</name>
    <name type="common">pigs</name>
    <dbReference type="NCBI Taxonomy" id="9821"/>
</organismHost>
<reference key="1">
    <citation type="journal article" date="1993" name="J. Gen. Virol.">
        <title>Cloning and sequence analysis of the phosphoprotein gene of rinderpest virus.</title>
        <authorList>
            <person name="Baron M.D."/>
            <person name="Shaila M.S."/>
            <person name="Barrett T."/>
        </authorList>
    </citation>
    <scope>NUCLEOTIDE SEQUENCE [GENOMIC RNA]</scope>
</reference>
<gene>
    <name type="primary">P/V/C</name>
</gene>
<protein>
    <recommendedName>
        <fullName>Protein C</fullName>
    </recommendedName>
</protein>